<evidence type="ECO:0000250" key="1">
    <source>
        <dbReference type="UniProtKB" id="E9Q9D5"/>
    </source>
</evidence>
<evidence type="ECO:0000250" key="2">
    <source>
        <dbReference type="UniProtKB" id="O35594"/>
    </source>
</evidence>
<evidence type="ECO:0000255" key="3"/>
<evidence type="ECO:0000269" key="4">
    <source>
    </source>
</evidence>
<evidence type="ECO:0000269" key="5">
    <source>
    </source>
</evidence>
<evidence type="ECO:0000269" key="6">
    <source>
    </source>
</evidence>
<evidence type="ECO:0000269" key="7">
    <source>
    </source>
</evidence>
<evidence type="ECO:0000269" key="8">
    <source>
    </source>
</evidence>
<evidence type="ECO:0000269" key="9">
    <source>
    </source>
</evidence>
<evidence type="ECO:0000269" key="10">
    <source>
    </source>
</evidence>
<evidence type="ECO:0000269" key="11">
    <source>
    </source>
</evidence>
<evidence type="ECO:0000269" key="12">
    <source>
    </source>
</evidence>
<evidence type="ECO:0000303" key="13">
    <source>
    </source>
</evidence>
<evidence type="ECO:0000303" key="14">
    <source ref="3"/>
</evidence>
<evidence type="ECO:0000305" key="15"/>
<evidence type="ECO:0000305" key="16">
    <source>
    </source>
</evidence>
<evidence type="ECO:0000312" key="17">
    <source>
        <dbReference type="EMBL" id="AAH04536.2"/>
    </source>
</evidence>
<evidence type="ECO:0000312" key="18">
    <source>
        <dbReference type="EMBL" id="AAH29349.1"/>
    </source>
</evidence>
<evidence type="ECO:0000312" key="19">
    <source>
        <dbReference type="EMBL" id="AAL50343.1"/>
    </source>
</evidence>
<evidence type="ECO:0007744" key="20">
    <source>
    </source>
</evidence>
<evidence type="ECO:0007744" key="21">
    <source>
    </source>
</evidence>
<name>IFT81_HUMAN</name>
<dbReference type="EMBL" id="AF250326">
    <property type="protein sequence ID" value="AAL50343.1"/>
    <property type="molecule type" value="mRNA"/>
</dbReference>
<dbReference type="EMBL" id="AF332010">
    <property type="protein sequence ID" value="AAO32947.1"/>
    <property type="molecule type" value="mRNA"/>
</dbReference>
<dbReference type="EMBL" id="AF139540">
    <property type="protein sequence ID" value="AAP97269.1"/>
    <property type="molecule type" value="mRNA"/>
</dbReference>
<dbReference type="EMBL" id="AF078932">
    <property type="protein sequence ID" value="AAD48091.1"/>
    <property type="molecule type" value="mRNA"/>
</dbReference>
<dbReference type="EMBL" id="CH471054">
    <property type="protein sequence ID" value="EAW97898.1"/>
    <property type="molecule type" value="Genomic_DNA"/>
</dbReference>
<dbReference type="EMBL" id="BC004536">
    <property type="protein sequence ID" value="AAH04536.2"/>
    <property type="molecule type" value="mRNA"/>
</dbReference>
<dbReference type="EMBL" id="BC029349">
    <property type="protein sequence ID" value="AAH29349.1"/>
    <property type="molecule type" value="mRNA"/>
</dbReference>
<dbReference type="EMBL" id="BC108257">
    <property type="protein sequence ID" value="AAI08258.1"/>
    <property type="molecule type" value="mRNA"/>
</dbReference>
<dbReference type="EMBL" id="AK091549">
    <property type="protein sequence ID" value="BAC03690.1"/>
    <property type="status" value="ALT_SEQ"/>
    <property type="molecule type" value="mRNA"/>
</dbReference>
<dbReference type="CCDS" id="CCDS41831.1">
    <molecule id="Q8WYA0-1"/>
</dbReference>
<dbReference type="CCDS" id="CCDS9142.1">
    <molecule id="Q8WYA0-3"/>
</dbReference>
<dbReference type="RefSeq" id="NP_001137251.1">
    <molecule id="Q8WYA0-1"/>
    <property type="nucleotide sequence ID" value="NM_001143779.2"/>
</dbReference>
<dbReference type="RefSeq" id="NP_001334875.1">
    <molecule id="Q8WYA0-3"/>
    <property type="nucleotide sequence ID" value="NM_001347946.2"/>
</dbReference>
<dbReference type="RefSeq" id="NP_054774.2">
    <molecule id="Q8WYA0-1"/>
    <property type="nucleotide sequence ID" value="NM_014055.3"/>
</dbReference>
<dbReference type="RefSeq" id="NP_113661.2">
    <molecule id="Q8WYA0-3"/>
    <property type="nucleotide sequence ID" value="NM_031473.3"/>
</dbReference>
<dbReference type="RefSeq" id="XP_016874706.1">
    <molecule id="Q8WYA0-1"/>
    <property type="nucleotide sequence ID" value="XM_017019217.2"/>
</dbReference>
<dbReference type="RefSeq" id="XP_054227828.1">
    <molecule id="Q8WYA0-1"/>
    <property type="nucleotide sequence ID" value="XM_054371853.1"/>
</dbReference>
<dbReference type="SMR" id="Q8WYA0"/>
<dbReference type="BioGRID" id="118802">
    <property type="interactions" value="76"/>
</dbReference>
<dbReference type="ComplexPortal" id="CPX-5022">
    <property type="entry name" value="Intraflagellar transport complex B"/>
</dbReference>
<dbReference type="CORUM" id="Q8WYA0"/>
<dbReference type="FunCoup" id="Q8WYA0">
    <property type="interactions" value="721"/>
</dbReference>
<dbReference type="IntAct" id="Q8WYA0">
    <property type="interactions" value="58"/>
</dbReference>
<dbReference type="MINT" id="Q8WYA0"/>
<dbReference type="STRING" id="9606.ENSP00000242591"/>
<dbReference type="TCDB" id="1.X.1.1.1">
    <property type="family name" value="the intraflagellar transporter-a complex (ift-a) family"/>
</dbReference>
<dbReference type="iPTMnet" id="Q8WYA0"/>
<dbReference type="PhosphoSitePlus" id="Q8WYA0"/>
<dbReference type="BioMuta" id="IFT81"/>
<dbReference type="DMDM" id="48474907"/>
<dbReference type="jPOST" id="Q8WYA0"/>
<dbReference type="MassIVE" id="Q8WYA0"/>
<dbReference type="PaxDb" id="9606-ENSP00000242591"/>
<dbReference type="PeptideAtlas" id="Q8WYA0"/>
<dbReference type="ProteomicsDB" id="75140">
    <molecule id="Q8WYA0-1"/>
</dbReference>
<dbReference type="ProteomicsDB" id="75141">
    <molecule id="Q8WYA0-3"/>
</dbReference>
<dbReference type="ProteomicsDB" id="75142">
    <molecule id="Q8WYA0-4"/>
</dbReference>
<dbReference type="Pumba" id="Q8WYA0"/>
<dbReference type="Antibodypedia" id="18491">
    <property type="antibodies" value="155 antibodies from 25 providers"/>
</dbReference>
<dbReference type="DNASU" id="28981"/>
<dbReference type="Ensembl" id="ENST00000242591.10">
    <molecule id="Q8WYA0-1"/>
    <property type="protein sequence ID" value="ENSP00000242591.5"/>
    <property type="gene ID" value="ENSG00000122970.16"/>
</dbReference>
<dbReference type="Ensembl" id="ENST00000361948.8">
    <molecule id="Q8WYA0-3"/>
    <property type="protein sequence ID" value="ENSP00000355372.4"/>
    <property type="gene ID" value="ENSG00000122970.16"/>
</dbReference>
<dbReference type="Ensembl" id="ENST00000552912.5">
    <molecule id="Q8WYA0-1"/>
    <property type="protein sequence ID" value="ENSP00000449718.1"/>
    <property type="gene ID" value="ENSG00000122970.16"/>
</dbReference>
<dbReference type="GeneID" id="28981"/>
<dbReference type="KEGG" id="hsa:28981"/>
<dbReference type="MANE-Select" id="ENST00000242591.10">
    <property type="protein sequence ID" value="ENSP00000242591.5"/>
    <property type="RefSeq nucleotide sequence ID" value="NM_014055.4"/>
    <property type="RefSeq protein sequence ID" value="NP_054774.2"/>
</dbReference>
<dbReference type="UCSC" id="uc001tqh.4">
    <molecule id="Q8WYA0-1"/>
    <property type="organism name" value="human"/>
</dbReference>
<dbReference type="AGR" id="HGNC:14313"/>
<dbReference type="CTD" id="28981"/>
<dbReference type="DisGeNET" id="28981"/>
<dbReference type="GeneCards" id="IFT81"/>
<dbReference type="HGNC" id="HGNC:14313">
    <property type="gene designation" value="IFT81"/>
</dbReference>
<dbReference type="HPA" id="ENSG00000122970">
    <property type="expression patterns" value="Low tissue specificity"/>
</dbReference>
<dbReference type="MalaCards" id="IFT81"/>
<dbReference type="MIM" id="605489">
    <property type="type" value="gene"/>
</dbReference>
<dbReference type="MIM" id="617895">
    <property type="type" value="phenotype"/>
</dbReference>
<dbReference type="neXtProt" id="NX_Q8WYA0"/>
<dbReference type="OpenTargets" id="ENSG00000122970"/>
<dbReference type="PharmGKB" id="PA26349"/>
<dbReference type="VEuPathDB" id="HostDB:ENSG00000122970"/>
<dbReference type="eggNOG" id="ENOG502QSBR">
    <property type="taxonomic scope" value="Eukaryota"/>
</dbReference>
<dbReference type="GeneTree" id="ENSGT00390000000999"/>
<dbReference type="HOGENOM" id="CLU_017012_1_0_1"/>
<dbReference type="InParanoid" id="Q8WYA0"/>
<dbReference type="OMA" id="WILTHME"/>
<dbReference type="OrthoDB" id="276029at2759"/>
<dbReference type="PAN-GO" id="Q8WYA0">
    <property type="GO annotations" value="5 GO annotations based on evolutionary models"/>
</dbReference>
<dbReference type="PhylomeDB" id="Q8WYA0"/>
<dbReference type="TreeFam" id="TF314635"/>
<dbReference type="PathwayCommons" id="Q8WYA0"/>
<dbReference type="Reactome" id="R-HSA-5620924">
    <property type="pathway name" value="Intraflagellar transport"/>
</dbReference>
<dbReference type="SignaLink" id="Q8WYA0"/>
<dbReference type="BioGRID-ORCS" id="28981">
    <property type="hits" value="20 hits in 1151 CRISPR screens"/>
</dbReference>
<dbReference type="ChiTaRS" id="IFT81">
    <property type="organism name" value="human"/>
</dbReference>
<dbReference type="GeneWiki" id="IFT81"/>
<dbReference type="GenomeRNAi" id="28981"/>
<dbReference type="Pharos" id="Q8WYA0">
    <property type="development level" value="Tbio"/>
</dbReference>
<dbReference type="PRO" id="PR:Q8WYA0"/>
<dbReference type="Proteomes" id="UP000005640">
    <property type="component" value="Chromosome 12"/>
</dbReference>
<dbReference type="RNAct" id="Q8WYA0">
    <property type="molecule type" value="protein"/>
</dbReference>
<dbReference type="Bgee" id="ENSG00000122970">
    <property type="expression patterns" value="Expressed in bronchial epithelial cell and 184 other cell types or tissues"/>
</dbReference>
<dbReference type="ExpressionAtlas" id="Q8WYA0">
    <property type="expression patterns" value="baseline and differential"/>
</dbReference>
<dbReference type="GO" id="GO:0005814">
    <property type="term" value="C:centriole"/>
    <property type="evidence" value="ECO:0007669"/>
    <property type="project" value="Ensembl"/>
</dbReference>
<dbReference type="GO" id="GO:0005813">
    <property type="term" value="C:centrosome"/>
    <property type="evidence" value="ECO:0007669"/>
    <property type="project" value="Ensembl"/>
</dbReference>
<dbReference type="GO" id="GO:0036064">
    <property type="term" value="C:ciliary basal body"/>
    <property type="evidence" value="ECO:0000314"/>
    <property type="project" value="UniProtKB"/>
</dbReference>
<dbReference type="GO" id="GO:0097542">
    <property type="term" value="C:ciliary tip"/>
    <property type="evidence" value="ECO:0000304"/>
    <property type="project" value="Reactome"/>
</dbReference>
<dbReference type="GO" id="GO:0005929">
    <property type="term" value="C:cilium"/>
    <property type="evidence" value="ECO:0000304"/>
    <property type="project" value="Reactome"/>
</dbReference>
<dbReference type="GO" id="GO:0005737">
    <property type="term" value="C:cytoplasm"/>
    <property type="evidence" value="ECO:0000250"/>
    <property type="project" value="UniProtKB"/>
</dbReference>
<dbReference type="GO" id="GO:0030992">
    <property type="term" value="C:intraciliary transport particle B"/>
    <property type="evidence" value="ECO:0000353"/>
    <property type="project" value="ComplexPortal"/>
</dbReference>
<dbReference type="GO" id="GO:0031514">
    <property type="term" value="C:motile cilium"/>
    <property type="evidence" value="ECO:0000250"/>
    <property type="project" value="BHF-UCL"/>
</dbReference>
<dbReference type="GO" id="GO:0097225">
    <property type="term" value="C:sperm midpiece"/>
    <property type="evidence" value="ECO:0007669"/>
    <property type="project" value="Ensembl"/>
</dbReference>
<dbReference type="GO" id="GO:0097228">
    <property type="term" value="C:sperm principal piece"/>
    <property type="evidence" value="ECO:0007669"/>
    <property type="project" value="Ensembl"/>
</dbReference>
<dbReference type="GO" id="GO:0015631">
    <property type="term" value="F:tubulin binding"/>
    <property type="evidence" value="ECO:0000314"/>
    <property type="project" value="UniProtKB"/>
</dbReference>
<dbReference type="GO" id="GO:0060271">
    <property type="term" value="P:cilium assembly"/>
    <property type="evidence" value="ECO:0000315"/>
    <property type="project" value="UniProtKB"/>
</dbReference>
<dbReference type="GO" id="GO:0035720">
    <property type="term" value="P:intraciliary anterograde transport"/>
    <property type="evidence" value="ECO:0000303"/>
    <property type="project" value="ComplexPortal"/>
</dbReference>
<dbReference type="GO" id="GO:0042073">
    <property type="term" value="P:intraciliary transport"/>
    <property type="evidence" value="ECO:0000318"/>
    <property type="project" value="GO_Central"/>
</dbReference>
<dbReference type="GO" id="GO:0035735">
    <property type="term" value="P:intraciliary transport involved in cilium assembly"/>
    <property type="evidence" value="ECO:0000315"/>
    <property type="project" value="UniProtKB"/>
</dbReference>
<dbReference type="GO" id="GO:0008589">
    <property type="term" value="P:regulation of smoothened signaling pathway"/>
    <property type="evidence" value="ECO:0000315"/>
    <property type="project" value="UniProtKB"/>
</dbReference>
<dbReference type="GO" id="GO:0120316">
    <property type="term" value="P:sperm flagellum assembly"/>
    <property type="evidence" value="ECO:0000250"/>
    <property type="project" value="UniProtKB"/>
</dbReference>
<dbReference type="GO" id="GO:0007283">
    <property type="term" value="P:spermatogenesis"/>
    <property type="evidence" value="ECO:0000250"/>
    <property type="project" value="UniProtKB"/>
</dbReference>
<dbReference type="FunFam" id="1.10.418.70:FF:000001">
    <property type="entry name" value="Intraflagellar transport protein 81 homolog"/>
    <property type="match status" value="1"/>
</dbReference>
<dbReference type="Gene3D" id="1.10.418.70">
    <property type="entry name" value="Intraflagellar transport protein 81, N-terminal domain"/>
    <property type="match status" value="1"/>
</dbReference>
<dbReference type="InterPro" id="IPR029600">
    <property type="entry name" value="IFT81"/>
</dbReference>
<dbReference type="InterPro" id="IPR041146">
    <property type="entry name" value="IFT81_CH"/>
</dbReference>
<dbReference type="InterPro" id="IPR043016">
    <property type="entry name" value="IFT81_N_sf"/>
</dbReference>
<dbReference type="PANTHER" id="PTHR15614">
    <property type="entry name" value="INTRAFLAGELLAR TRANSPORT PROTEIN 81 HOMOLOG"/>
    <property type="match status" value="1"/>
</dbReference>
<dbReference type="PANTHER" id="PTHR15614:SF2">
    <property type="entry name" value="INTRAFLAGELLAR TRANSPORT PROTEIN 81 HOMOLOG"/>
    <property type="match status" value="1"/>
</dbReference>
<dbReference type="Pfam" id="PF18383">
    <property type="entry name" value="IFT81_CH"/>
    <property type="match status" value="1"/>
</dbReference>
<reference evidence="15" key="1">
    <citation type="journal article" date="2000" name="Mamm. Genome">
        <title>Genomic organization and mapping of mouse CDV (carnitine deficiency-associated gene expressed in ventricle)-1 and its related CDV-1R gene.</title>
        <authorList>
            <person name="Higashi M."/>
            <person name="Kobayashi K."/>
            <person name="Iijima M."/>
            <person name="Wakana S."/>
            <person name="Horiuchi M."/>
            <person name="Yasuda T."/>
            <person name="Yoshida G."/>
            <person name="Kanmura Y."/>
            <person name="Saheki T."/>
        </authorList>
    </citation>
    <scope>NUCLEOTIDE SEQUENCE [MRNA] (ISOFORM CDV-1R)</scope>
    <source>
        <tissue>Lymphocyte</tissue>
    </source>
</reference>
<reference evidence="15" key="2">
    <citation type="journal article" date="2002" name="Mol. Biol. Rep.">
        <title>Identification of human CDV-1R and mouse Cdv-1R, two novel proteins with putative signal peptides, especially highly expressed in testis and increased with the male sex maturation.</title>
        <authorList>
            <person name="Peng J."/>
            <person name="Yu L."/>
            <person name="Horiuchi M."/>
            <person name="Zhang P."/>
            <person name="Huang X."/>
            <person name="Zhang Y."/>
            <person name="Li D."/>
            <person name="Jalil M.A."/>
            <person name="Zhao S."/>
        </authorList>
    </citation>
    <scope>NUCLEOTIDE SEQUENCE [MRNA] (ISOFORM CDV-1R)</scope>
    <scope>TISSUE SPECIFICITY</scope>
    <source>
        <tissue evidence="5">Testis</tissue>
    </source>
</reference>
<reference evidence="15" key="3">
    <citation type="submission" date="1998-07" db="EMBL/GenBank/DDBJ databases">
        <authorList>
            <person name="Hu G."/>
        </authorList>
    </citation>
    <scope>NUCLEOTIDE SEQUENCE [MRNA] (ISOFORM CDV-1)</scope>
</reference>
<reference evidence="15" key="4">
    <citation type="submission" date="2005-07" db="EMBL/GenBank/DDBJ databases">
        <authorList>
            <person name="Mural R.J."/>
            <person name="Istrail S."/>
            <person name="Sutton G.G."/>
            <person name="Florea L."/>
            <person name="Halpern A.L."/>
            <person name="Mobarry C.M."/>
            <person name="Lippert R."/>
            <person name="Walenz B."/>
            <person name="Shatkay H."/>
            <person name="Dew I."/>
            <person name="Miller J.R."/>
            <person name="Flanigan M.J."/>
            <person name="Edwards N.J."/>
            <person name="Bolanos R."/>
            <person name="Fasulo D."/>
            <person name="Halldorsson B.V."/>
            <person name="Hannenhalli S."/>
            <person name="Turner R."/>
            <person name="Yooseph S."/>
            <person name="Lu F."/>
            <person name="Nusskern D.R."/>
            <person name="Shue B.C."/>
            <person name="Zheng X.H."/>
            <person name="Zhong F."/>
            <person name="Delcher A.L."/>
            <person name="Huson D.H."/>
            <person name="Kravitz S.A."/>
            <person name="Mouchard L."/>
            <person name="Reinert K."/>
            <person name="Remington K.A."/>
            <person name="Clark A.G."/>
            <person name="Waterman M.S."/>
            <person name="Eichler E.E."/>
            <person name="Adams M.D."/>
            <person name="Hunkapiller M.W."/>
            <person name="Myers E.W."/>
            <person name="Venter J.C."/>
        </authorList>
    </citation>
    <scope>NUCLEOTIDE SEQUENCE [LARGE SCALE GENOMIC DNA]</scope>
</reference>
<reference evidence="15" key="5">
    <citation type="journal article" date="2004" name="Genome Res.">
        <title>The status, quality, and expansion of the NIH full-length cDNA project: the Mammalian Gene Collection (MGC).</title>
        <authorList>
            <consortium name="The MGC Project Team"/>
        </authorList>
    </citation>
    <scope>NUCLEOTIDE SEQUENCE [LARGE SCALE MRNA] (ISOFORMS 2 AND CDV-1)</scope>
    <source>
        <tissue evidence="18">Skeletal muscle</tissue>
        <tissue evidence="17">Uterus</tissue>
    </source>
</reference>
<reference evidence="15" key="6">
    <citation type="journal article" date="2004" name="Nat. Genet.">
        <title>Complete sequencing and characterization of 21,243 full-length human cDNAs.</title>
        <authorList>
            <person name="Ota T."/>
            <person name="Suzuki Y."/>
            <person name="Nishikawa T."/>
            <person name="Otsuki T."/>
            <person name="Sugiyama T."/>
            <person name="Irie R."/>
            <person name="Wakamatsu A."/>
            <person name="Hayashi K."/>
            <person name="Sato H."/>
            <person name="Nagai K."/>
            <person name="Kimura K."/>
            <person name="Makita H."/>
            <person name="Sekine M."/>
            <person name="Obayashi M."/>
            <person name="Nishi T."/>
            <person name="Shibahara T."/>
            <person name="Tanaka T."/>
            <person name="Ishii S."/>
            <person name="Yamamoto J."/>
            <person name="Saito K."/>
            <person name="Kawai Y."/>
            <person name="Isono Y."/>
            <person name="Nakamura Y."/>
            <person name="Nagahari K."/>
            <person name="Murakami K."/>
            <person name="Yasuda T."/>
            <person name="Iwayanagi T."/>
            <person name="Wagatsuma M."/>
            <person name="Shiratori A."/>
            <person name="Sudo H."/>
            <person name="Hosoiri T."/>
            <person name="Kaku Y."/>
            <person name="Kodaira H."/>
            <person name="Kondo H."/>
            <person name="Sugawara M."/>
            <person name="Takahashi M."/>
            <person name="Kanda K."/>
            <person name="Yokoi T."/>
            <person name="Furuya T."/>
            <person name="Kikkawa E."/>
            <person name="Omura Y."/>
            <person name="Abe K."/>
            <person name="Kamihara K."/>
            <person name="Katsuta N."/>
            <person name="Sato K."/>
            <person name="Tanikawa M."/>
            <person name="Yamazaki M."/>
            <person name="Ninomiya K."/>
            <person name="Ishibashi T."/>
            <person name="Yamashita H."/>
            <person name="Murakawa K."/>
            <person name="Fujimori K."/>
            <person name="Tanai H."/>
            <person name="Kimata M."/>
            <person name="Watanabe M."/>
            <person name="Hiraoka S."/>
            <person name="Chiba Y."/>
            <person name="Ishida S."/>
            <person name="Ono Y."/>
            <person name="Takiguchi S."/>
            <person name="Watanabe S."/>
            <person name="Yosida M."/>
            <person name="Hotuta T."/>
            <person name="Kusano J."/>
            <person name="Kanehori K."/>
            <person name="Takahashi-Fujii A."/>
            <person name="Hara H."/>
            <person name="Tanase T.-O."/>
            <person name="Nomura Y."/>
            <person name="Togiya S."/>
            <person name="Komai F."/>
            <person name="Hara R."/>
            <person name="Takeuchi K."/>
            <person name="Arita M."/>
            <person name="Imose N."/>
            <person name="Musashino K."/>
            <person name="Yuuki H."/>
            <person name="Oshima A."/>
            <person name="Sasaki N."/>
            <person name="Aotsuka S."/>
            <person name="Yoshikawa Y."/>
            <person name="Matsunawa H."/>
            <person name="Ichihara T."/>
            <person name="Shiohata N."/>
            <person name="Sano S."/>
            <person name="Moriya S."/>
            <person name="Momiyama H."/>
            <person name="Satoh N."/>
            <person name="Takami S."/>
            <person name="Terashima Y."/>
            <person name="Suzuki O."/>
            <person name="Nakagawa S."/>
            <person name="Senoh A."/>
            <person name="Mizoguchi H."/>
            <person name="Goto Y."/>
            <person name="Shimizu F."/>
            <person name="Wakebe H."/>
            <person name="Hishigaki H."/>
            <person name="Watanabe T."/>
            <person name="Sugiyama A."/>
            <person name="Takemoto M."/>
            <person name="Kawakami B."/>
            <person name="Yamazaki M."/>
            <person name="Watanabe K."/>
            <person name="Kumagai A."/>
            <person name="Itakura S."/>
            <person name="Fukuzumi Y."/>
            <person name="Fujimori Y."/>
            <person name="Komiyama M."/>
            <person name="Tashiro H."/>
            <person name="Tanigami A."/>
            <person name="Fujiwara T."/>
            <person name="Ono T."/>
            <person name="Yamada K."/>
            <person name="Fujii Y."/>
            <person name="Ozaki K."/>
            <person name="Hirao M."/>
            <person name="Ohmori Y."/>
            <person name="Kawabata A."/>
            <person name="Hikiji T."/>
            <person name="Kobatake N."/>
            <person name="Inagaki H."/>
            <person name="Ikema Y."/>
            <person name="Okamoto S."/>
            <person name="Okitani R."/>
            <person name="Kawakami T."/>
            <person name="Noguchi S."/>
            <person name="Itoh T."/>
            <person name="Shigeta K."/>
            <person name="Senba T."/>
            <person name="Matsumura K."/>
            <person name="Nakajima Y."/>
            <person name="Mizuno T."/>
            <person name="Morinaga M."/>
            <person name="Sasaki M."/>
            <person name="Togashi T."/>
            <person name="Oyama M."/>
            <person name="Hata H."/>
            <person name="Watanabe M."/>
            <person name="Komatsu T."/>
            <person name="Mizushima-Sugano J."/>
            <person name="Satoh T."/>
            <person name="Shirai Y."/>
            <person name="Takahashi Y."/>
            <person name="Nakagawa K."/>
            <person name="Okumura K."/>
            <person name="Nagase T."/>
            <person name="Nomura N."/>
            <person name="Kikuchi H."/>
            <person name="Masuho Y."/>
            <person name="Yamashita R."/>
            <person name="Nakai K."/>
            <person name="Yada T."/>
            <person name="Nakamura Y."/>
            <person name="Ohara O."/>
            <person name="Isogai T."/>
            <person name="Sugano S."/>
        </authorList>
    </citation>
    <scope>NUCLEOTIDE SEQUENCE [LARGE SCALE MRNA] OF 32-676 (ISOFORM CDV-1R)</scope>
    <source>
        <tissue evidence="6">Fetal brain</tissue>
    </source>
</reference>
<reference key="7">
    <citation type="journal article" date="2005" name="J. Biol. Chem.">
        <title>Characterization of the intraflagellar transport complex B core: direct interaction of the IFT81 and IFT74/72 subunits.</title>
        <authorList>
            <person name="Lucker B.F."/>
            <person name="Behal R.H."/>
            <person name="Qin H."/>
            <person name="Siron L.C."/>
            <person name="Taggart W.D."/>
            <person name="Rosenbaum J.L."/>
            <person name="Cole D.G."/>
        </authorList>
    </citation>
    <scope>INTERACTION WITH IFT74</scope>
</reference>
<reference key="8">
    <citation type="journal article" date="2008" name="J. Proteome Res.">
        <title>Phosphoproteome of resting human platelets.</title>
        <authorList>
            <person name="Zahedi R.P."/>
            <person name="Lewandrowski U."/>
            <person name="Wiesner J."/>
            <person name="Wortelkamp S."/>
            <person name="Moebius J."/>
            <person name="Schuetz C."/>
            <person name="Walter U."/>
            <person name="Gambaryan S."/>
            <person name="Sickmann A."/>
        </authorList>
    </citation>
    <scope>PHOSPHORYLATION [LARGE SCALE ANALYSIS] AT THR-61</scope>
    <scope>IDENTIFICATION BY MASS SPECTROMETRY [LARGE SCALE ANALYSIS]</scope>
    <source>
        <tissue>Platelet</tissue>
    </source>
</reference>
<reference key="9">
    <citation type="journal article" date="2011" name="BMC Syst. Biol.">
        <title>Initial characterization of the human central proteome.</title>
        <authorList>
            <person name="Burkard T.R."/>
            <person name="Planyavsky M."/>
            <person name="Kaupe I."/>
            <person name="Breitwieser F.P."/>
            <person name="Buerckstuemmer T."/>
            <person name="Bennett K.L."/>
            <person name="Superti-Furga G."/>
            <person name="Colinge J."/>
        </authorList>
    </citation>
    <scope>IDENTIFICATION BY MASS SPECTROMETRY [LARGE SCALE ANALYSIS]</scope>
</reference>
<reference key="10">
    <citation type="journal article" date="2012" name="Proc. Natl. Acad. Sci. U.S.A.">
        <title>N-terminal acetylome analyses and functional insights of the N-terminal acetyltransferase NatB.</title>
        <authorList>
            <person name="Van Damme P."/>
            <person name="Lasa M."/>
            <person name="Polevoda B."/>
            <person name="Gazquez C."/>
            <person name="Elosegui-Artola A."/>
            <person name="Kim D.S."/>
            <person name="De Juan-Pardo E."/>
            <person name="Demeyer K."/>
            <person name="Hole K."/>
            <person name="Larrea E."/>
            <person name="Timmerman E."/>
            <person name="Prieto J."/>
            <person name="Arnesen T."/>
            <person name="Sherman F."/>
            <person name="Gevaert K."/>
            <person name="Aldabe R."/>
        </authorList>
    </citation>
    <scope>ACETYLATION [LARGE SCALE ANALYSIS] AT SER-2</scope>
    <scope>CLEAVAGE OF INITIATOR METHIONINE [LARGE SCALE ANALYSIS]</scope>
    <scope>IDENTIFICATION BY MASS SPECTROMETRY [LARGE SCALE ANALYSIS]</scope>
</reference>
<reference key="11">
    <citation type="journal article" date="2013" name="Science">
        <title>Molecular basis of tubulin transport within the cilium by IFT74 and IFT81.</title>
        <authorList>
            <person name="Bhogaraju S."/>
            <person name="Cajanek L."/>
            <person name="Fort C."/>
            <person name="Blisnick T."/>
            <person name="Weber K."/>
            <person name="Taschner M."/>
            <person name="Mizuno N."/>
            <person name="Lamla S."/>
            <person name="Bastin P."/>
            <person name="Nigg E.A."/>
            <person name="Lorentzen E."/>
        </authorList>
    </citation>
    <scope>FUNCTION</scope>
    <scope>SUBCELLULAR LOCATION</scope>
    <scope>IDENTIFICATION IN THE IFT COMPLEX B</scope>
    <scope>INTERACTION WITH TUBULIN AND IFT74</scope>
    <scope>MUTAGENESIS OF 73-LYS--LYS-75 AND 113-LYS-LYS-114</scope>
</reference>
<reference key="12">
    <citation type="journal article" date="2016" name="Sci. Rep.">
        <title>Destabilization of the IFT-B cilia core complex due to mutations in IFT81 causes a spectrum of short-rib polydactyly syndrome.</title>
        <authorList>
            <person name="Duran I."/>
            <person name="Taylor S.P."/>
            <person name="Zhang W."/>
            <person name="Martin J."/>
            <person name="Forlenza K.N."/>
            <person name="Spiro R.P."/>
            <person name="Nickerson D.A."/>
            <person name="Bamshad M."/>
            <person name="Cohn D.H."/>
            <person name="Krakow D."/>
        </authorList>
    </citation>
    <scope>FUNCTION</scope>
    <scope>INVOLVEMENT IN SRTD19</scope>
    <scope>VARIANTS SRTD19 PHE-29; LEU-435 DEL; 262-LEU--LEU-676 DEL AND 512-ARG--LEU-676 DEL</scope>
</reference>
<reference key="13">
    <citation type="journal article" date="2017" name="Dev. Cell">
        <title>The CEP19-RABL2 GTPase complex binds IFT-B to initiate intraflagellar transport at the ciliary base.</title>
        <authorList>
            <person name="Kanie T."/>
            <person name="Abbott K.L."/>
            <person name="Mooney N.A."/>
            <person name="Plowey E.D."/>
            <person name="Demeter J."/>
            <person name="Jackson P.K."/>
        </authorList>
    </citation>
    <scope>INTERACTION WITH RABL2B AND IFT74</scope>
</reference>
<reference key="14">
    <citation type="journal article" date="2017" name="Mol. Biol. Cell">
        <title>RABL2 interacts with the intraflagellar transport-B complex and CEP19 and participates in ciliary assembly.</title>
        <authorList>
            <person name="Nishijima Y."/>
            <person name="Hagiya Y."/>
            <person name="Kubo T."/>
            <person name="Takei R."/>
            <person name="Katoh Y."/>
            <person name="Nakayama K."/>
        </authorList>
    </citation>
    <scope>INTERACTION WITH RABL2B AND IFT74</scope>
</reference>
<reference key="15">
    <citation type="journal article" date="2023" name="J. Cell Sci.">
        <title>CCDC66 regulates primary cilium length and signaling via interactions with transition zone and axonemal proteins.</title>
        <authorList>
            <person name="Odabasi E."/>
            <person name="Conkar D."/>
            <person name="Deretic J."/>
            <person name="Batman U."/>
            <person name="Frikstad K.M."/>
            <person name="Patzke S."/>
            <person name="Firat-Karalar E.N."/>
        </authorList>
    </citation>
    <scope>SUBCELLULAR LOCATION</scope>
</reference>
<gene>
    <name type="primary">IFT81</name>
    <name type="synonym">CDV1</name>
</gene>
<feature type="initiator methionine" description="Removed" evidence="21">
    <location>
        <position position="1"/>
    </location>
</feature>
<feature type="chain" id="PRO_0000020916" description="Intraflagellar transport protein 81 homolog">
    <location>
        <begin position="2"/>
        <end position="676"/>
    </location>
</feature>
<feature type="region of interest" description="CH (calponin-homology)-like region">
    <location>
        <begin position="2"/>
        <end position="121"/>
    </location>
</feature>
<feature type="coiled-coil region" evidence="3">
    <location>
        <begin position="132"/>
        <end position="258"/>
    </location>
</feature>
<feature type="coiled-coil region" evidence="3">
    <location>
        <begin position="306"/>
        <end position="389"/>
    </location>
</feature>
<feature type="coiled-coil region" evidence="3">
    <location>
        <begin position="416"/>
        <end position="456"/>
    </location>
</feature>
<feature type="coiled-coil region" evidence="3">
    <location>
        <begin position="490"/>
        <end position="622"/>
    </location>
</feature>
<feature type="modified residue" description="N-acetylserine" evidence="21">
    <location>
        <position position="2"/>
    </location>
</feature>
<feature type="modified residue" description="Phosphothreonine" evidence="20">
    <location>
        <position position="61"/>
    </location>
</feature>
<feature type="splice variant" id="VSP_018784" description="In isoform CDV-1." evidence="13 14">
    <location>
        <begin position="1"/>
        <end position="569"/>
    </location>
</feature>
<feature type="splice variant" id="VSP_050695" description="In isoform 2." evidence="13">
    <original>FKRYVNKLRSKSTVFKKKHQIIAELKAEFGLLQRT</original>
    <variation>RQDLTLSPRLECGGVIMAYCSLKLLGSSDPPTSAS</variation>
    <location>
        <begin position="397"/>
        <end position="431"/>
    </location>
</feature>
<feature type="splice variant" id="VSP_050696" description="In isoform 2." evidence="13">
    <location>
        <begin position="432"/>
        <end position="676"/>
    </location>
</feature>
<feature type="sequence variant" id="VAR_080485" description="In SRTD19; dbSNP:rs751222088." evidence="9">
    <original>L</original>
    <variation>F</variation>
    <location>
        <position position="29"/>
    </location>
</feature>
<feature type="sequence variant" id="VAR_080487" description="In SRTD19." evidence="9">
    <location>
        <begin position="262"/>
        <end position="676"/>
    </location>
</feature>
<feature type="sequence variant" id="VAR_080793" description="In SRTD19; uncertain significance." evidence="9">
    <location>
        <position position="435"/>
    </location>
</feature>
<feature type="sequence variant" id="VAR_080488" description="In SRTD19." evidence="9">
    <location>
        <begin position="512"/>
        <end position="676"/>
    </location>
</feature>
<feature type="mutagenesis site" description="Abolishes tubulin-binding and impaired ciliogenesis; when associated with 113-E-E-114." evidence="8">
    <original>KYK</original>
    <variation>EYE</variation>
    <location>
        <begin position="73"/>
        <end position="75"/>
    </location>
</feature>
<feature type="mutagenesis site" description="Abolishes tubulin-binding and impaired ciliogenesis; when associated with 73-E--E-75." evidence="8">
    <original>KK</original>
    <variation>EE</variation>
    <location>
        <begin position="113"/>
        <end position="114"/>
    </location>
</feature>
<feature type="sequence conflict" description="In Ref. 6; BAC03690." evidence="15" ref="6">
    <original>E</original>
    <variation>K</variation>
    <location>
        <position position="59"/>
    </location>
</feature>
<sequence length="676" mass="79746">MSDQIKFIMDSLNKEPFRKNYNLITFDSLEPMQLLQVLSDVLAEIDPKQLVDIREEMPEQTAKRMLSLLGILKYKPSGNATDMSTFRQGLVIGSKPVIYPVLHWLLQRTNELKKRAYLARFLIKLEVPSEFLQDETVADTNKQYEELMEAFKTLHKEYEQLKISGFSTAEIRKDISAMEEEKDQLIKRVEHLKKRVETAQNHQWMLKIARQLRVEKEREEYLAQQKQEQKNQLFHAVQRLQRVQNQLKSMRQAAADAKPESLMKRLEEEIKFNLYMVTEKFPKELENKKKELHFLQKVVSEPAMGHSDLLELESKINEINTEINQLIEKKMMRNEPIEGKLSLYRQQASIISRKKEAKAEELQEAKEKLASLEREASVKRNQTREFDGTEVLKGDEFKRYVNKLRSKSTVFKKKHQIIAELKAEFGLLQRTEELLKQRHENIQQQLQTMEEKKGISGYSYTQEELERVSALKSEVDEMKGRTLDDMSEMVKKLYSLVSEKKSALASVIKELRQLRQKYQELTQECDEKKSQYDSCAAGLESNRSKLEQEVRRLREECLQEESRYHYTNCMIKNLEVQLRRATDEMKAYISSDQQEKRKAIREQYTKNTAEQENLGKKLREKQKVIRESHGPNMKQAKMWRDLEQLMECKKQCFLKQQSQTSIGQVIQEGGEDRLIL</sequence>
<comment type="function">
    <text evidence="2 8 9">Component of the intraflagellar transport (IFT) complex B: together with IFT74, forms a tubulin-binding module that specifically mediates transport of tubulin within the cilium. Binds tubulin via its CH (calponin-homology)-like region (PubMed:23990561). Required for ciliogenesis (PubMed:23990561, PubMed:27666822). Required for proper regulation of SHH signaling (PubMed:27666822). Plays an important role during spermatogenesis by modulating the assembly and elongation of the sperm flagella (By similarity).</text>
</comment>
<comment type="subunit">
    <text evidence="1 2 7 8 10 11">Component of the IFT complex B, at least composed of IFT20, IFT22, IFT25, IFT27, IFT46, IFT52, TRAF3IP1/IFT54, IFT57, IFT74, IFT80, IFT81, and IFT88 (PubMed:23990561). Interacts with IFT74; the interaction is direct: within the IFT complex B, IFT74 and IFT81 mediate the transport of tubulin within the cilium (PubMed:15955805, PubMed:23990561). Interacts with tubulin; the interaction is direct (PubMed:23990561). Interacts with IFT57 and IFT70B (By similarity). Interacts with RABL2/RABL2A; binding is equal in the presence of GTP or GDP (By similarity). Interacts with IFT88 (PubMed:23990561). Interacts (via the IFT74/IFT81 heterodimer) with RABL2B (PubMed:28428259, PubMed:28625565). Interacts with CFAP61 (By similarity).</text>
</comment>
<comment type="interaction">
    <interactant intactId="EBI-11944793">
        <id>Q8WYA0-3</id>
    </interactant>
    <interactant intactId="EBI-12066130">
        <id>Q96LB3-2</id>
        <label>IFT74</label>
    </interactant>
    <organismsDiffer>false</organismsDiffer>
    <experiments>3</experiments>
</comment>
<comment type="subcellular location">
    <subcellularLocation>
        <location evidence="16">Cell projection</location>
        <location evidence="16">Cilium</location>
    </subcellularLocation>
    <subcellularLocation>
        <location evidence="2">Cytoplasm</location>
    </subcellularLocation>
    <subcellularLocation>
        <location evidence="12">Cytoplasm</location>
        <location evidence="12">Cytoskeleton</location>
        <location evidence="12">Cilium basal body</location>
    </subcellularLocation>
</comment>
<comment type="alternative products">
    <event type="alternative splicing"/>
    <event type="alternative initiation"/>
    <isoform>
        <id>Q8WYA0-1</id>
        <name evidence="4 5">CDV-1R</name>
        <sequence type="displayed"/>
    </isoform>
    <isoform>
        <id>Q8WYA0-3</id>
        <name evidence="15">2</name>
        <sequence type="described" ref="VSP_050695 VSP_050696"/>
    </isoform>
    <isoform>
        <id>Q8WYA0-4</id>
        <name>CDV-1</name>
        <sequence type="described" ref="VSP_018784"/>
    </isoform>
</comment>
<comment type="tissue specificity">
    <text evidence="5">Highly expressed in testis, moderately in ovary, heart, liver, skeletal muscle, kidney and pancreas, low in prostate, brain, placenta and lung and not detected in spleen, thymus, small intestine and colon. Isoform CDV-1R is abundantly expressed in testis.</text>
</comment>
<comment type="domain">
    <text evidence="8">The CH (calponin-homology)-like region shows high similarity to a CH (calponin-homology) domain and mediates binding to the globular domain of tubulin.</text>
</comment>
<comment type="disease" evidence="9">
    <disease id="DI-05204">
        <name>Short-rib thoracic dysplasia 19 with or without polydactyly</name>
        <acronym>SRTD19</acronym>
        <description>A form of short-rib thoracic dysplasia, a group of autosomal recessive ciliopathies that are characterized by a constricted thoracic cage, short ribs, shortened tubular bones, and a 'trident' appearance of the acetabular roof. Polydactyly is variably present. Non-skeletal involvement can include cleft lip/palate as well as anomalies of major organs such as the brain, eye, heart, kidneys, liver, pancreas, intestines, and genitalia. Some forms of the disease are lethal in the neonatal period due to respiratory insufficiency secondary to a severely restricted thoracic cage, whereas others are compatible with life. Disease spectrum encompasses Ellis-van Creveld syndrome, asphyxiating thoracic dystrophy (Jeune syndrome), Mainzer-Saldino syndrome, and short rib-polydactyly syndrome.</description>
        <dbReference type="MIM" id="617895"/>
    </disease>
    <text>The disease is caused by variants affecting the gene represented in this entry.</text>
</comment>
<comment type="miscellaneous">
    <molecule>Isoform CDV-1</molecule>
    <text evidence="15">Produced by alternative initiation at Met-570 of isoform CDV-1R.</text>
</comment>
<comment type="similarity">
    <text evidence="15">Belongs to the IFT81 family.</text>
</comment>
<protein>
    <recommendedName>
        <fullName>Intraflagellar transport protein 81 homolog</fullName>
    </recommendedName>
    <alternativeName>
        <fullName>Carnitine deficiency-associated protein expressed in ventricle 1</fullName>
        <shortName>CDV-1</shortName>
    </alternativeName>
</protein>
<proteinExistence type="evidence at protein level"/>
<organism evidence="19">
    <name type="scientific">Homo sapiens</name>
    <name type="common">Human</name>
    <dbReference type="NCBI Taxonomy" id="9606"/>
    <lineage>
        <taxon>Eukaryota</taxon>
        <taxon>Metazoa</taxon>
        <taxon>Chordata</taxon>
        <taxon>Craniata</taxon>
        <taxon>Vertebrata</taxon>
        <taxon>Euteleostomi</taxon>
        <taxon>Mammalia</taxon>
        <taxon>Eutheria</taxon>
        <taxon>Euarchontoglires</taxon>
        <taxon>Primates</taxon>
        <taxon>Haplorrhini</taxon>
        <taxon>Catarrhini</taxon>
        <taxon>Hominidae</taxon>
        <taxon>Homo</taxon>
    </lineage>
</organism>
<accession>Q8WYA0</accession>
<accession>Q2YDY1</accession>
<accession>Q8NB51</accession>
<accession>Q9BSV2</accession>
<accession>Q9UNY8</accession>
<keyword id="KW-0007">Acetylation</keyword>
<keyword id="KW-0024">Alternative initiation</keyword>
<keyword id="KW-0025">Alternative splicing</keyword>
<keyword id="KW-0966">Cell projection</keyword>
<keyword id="KW-1186">Ciliopathy</keyword>
<keyword id="KW-0969">Cilium</keyword>
<keyword id="KW-0970">Cilium biogenesis/degradation</keyword>
<keyword id="KW-0175">Coiled coil</keyword>
<keyword id="KW-0963">Cytoplasm</keyword>
<keyword id="KW-0206">Cytoskeleton</keyword>
<keyword id="KW-0221">Differentiation</keyword>
<keyword id="KW-0225">Disease variant</keyword>
<keyword id="KW-0597">Phosphoprotein</keyword>
<keyword id="KW-1267">Proteomics identification</keyword>
<keyword id="KW-1185">Reference proteome</keyword>
<keyword id="KW-0744">Spermatogenesis</keyword>